<dbReference type="EMBL" id="CP000084">
    <property type="protein sequence ID" value="AAZ22105.1"/>
    <property type="molecule type" value="Genomic_DNA"/>
</dbReference>
<dbReference type="RefSeq" id="WP_006997986.1">
    <property type="nucleotide sequence ID" value="NC_007205.1"/>
</dbReference>
<dbReference type="SMR" id="Q4FL33"/>
<dbReference type="STRING" id="335992.SAR11_1302"/>
<dbReference type="GeneID" id="66295792"/>
<dbReference type="KEGG" id="pub:SAR11_1302"/>
<dbReference type="eggNOG" id="COG2113">
    <property type="taxonomic scope" value="Bacteria"/>
</dbReference>
<dbReference type="HOGENOM" id="CLU_072064_0_0_5"/>
<dbReference type="OrthoDB" id="7805658at2"/>
<dbReference type="Proteomes" id="UP000002528">
    <property type="component" value="Chromosome"/>
</dbReference>
<dbReference type="GO" id="GO:0043190">
    <property type="term" value="C:ATP-binding cassette (ABC) transporter complex"/>
    <property type="evidence" value="ECO:0007669"/>
    <property type="project" value="InterPro"/>
</dbReference>
<dbReference type="GO" id="GO:0042597">
    <property type="term" value="C:periplasmic space"/>
    <property type="evidence" value="ECO:0007669"/>
    <property type="project" value="UniProtKB-SubCell"/>
</dbReference>
<dbReference type="GO" id="GO:0022857">
    <property type="term" value="F:transmembrane transporter activity"/>
    <property type="evidence" value="ECO:0007669"/>
    <property type="project" value="InterPro"/>
</dbReference>
<dbReference type="CDD" id="cd13643">
    <property type="entry name" value="PBP2_BCP_2"/>
    <property type="match status" value="1"/>
</dbReference>
<dbReference type="Gene3D" id="3.10.105.10">
    <property type="entry name" value="Dipeptide-binding Protein, Domain 3"/>
    <property type="match status" value="1"/>
</dbReference>
<dbReference type="Gene3D" id="3.40.190.100">
    <property type="entry name" value="Glycine betaine-binding periplasmic protein, domain 2"/>
    <property type="match status" value="1"/>
</dbReference>
<dbReference type="Gene3D" id="3.40.190.10">
    <property type="entry name" value="Periplasmic binding protein-like II"/>
    <property type="match status" value="1"/>
</dbReference>
<dbReference type="InterPro" id="IPR007210">
    <property type="entry name" value="ABC_Gly_betaine_transp_sub-bd"/>
</dbReference>
<dbReference type="Pfam" id="PF04069">
    <property type="entry name" value="OpuAC"/>
    <property type="match status" value="1"/>
</dbReference>
<dbReference type="SUPFAM" id="SSF53850">
    <property type="entry name" value="Periplasmic binding protein-like II"/>
    <property type="match status" value="1"/>
</dbReference>
<sequence>MKKIVSLMSALVISVVSFAGISNAADSKKPIVIPTHNWSSQIVMAHVIGGIFESMGNNVKYVNTDSQAVYESIRLGDVSLSHEVWESAFGKSFTTALDKGGLVDWGDHEARTLEDMGYPNWVAEKGLCPGLPDWTALKNPACAKNFTTPDSGGKGRMLEGPQTWHGDLIPQRVDALGLGDLWTVKFAGSADALWAELVAAEKEGRGTIIFNWTPNFTDGAGFTFIDFPPYTAGCRPEDGGDGKCGSPDGYLKKAVNADFPKTHPAAAATFKKMSFSTSHIGAMAALVDVDKMTHEDAAKKWLADNKSVWTPFTK</sequence>
<proteinExistence type="evidence at protein level"/>
<comment type="function">
    <text evidence="3">Part of the ABC transporter complex TmoXWV involved in trimethylamine N-oxide (TMAO) import (PubMed:35295296). Possesses a high binding affinity toward TMAO, but presents little binding affinity toward betaine, carnitine, trimethylamine (TMA) or dimethylamine (DMA) (PubMed:35295296).</text>
</comment>
<comment type="subunit">
    <text evidence="6">The complex is probably composed of two ATP-binding proteins (TmoW), two transmembrane proteins (TmoV) and a solute-binding protein (TmoX).</text>
</comment>
<comment type="subcellular location">
    <subcellularLocation>
        <location evidence="5">Periplasm</location>
    </subcellularLocation>
</comment>
<accession>Q4FL33</accession>
<reference key="1">
    <citation type="journal article" date="2005" name="Science">
        <title>Genome streamlining in a cosmopolitan oceanic bacterium.</title>
        <authorList>
            <person name="Giovannoni S.J."/>
            <person name="Tripp H.J."/>
            <person name="Givan S."/>
            <person name="Podar M."/>
            <person name="Vergin K.L."/>
            <person name="Baptista D."/>
            <person name="Bibbs L."/>
            <person name="Eads J."/>
            <person name="Richardson T.H."/>
            <person name="Noordewier M."/>
            <person name="Rappe M.S."/>
            <person name="Short J.M."/>
            <person name="Carrington J.C."/>
            <person name="Mathur E.J."/>
        </authorList>
    </citation>
    <scope>NUCLEOTIDE SEQUENCE [LARGE SCALE GENOMIC DNA]</scope>
    <source>
        <strain>HTCC1062</strain>
    </source>
</reference>
<reference key="2">
    <citation type="journal article" date="2022" name="Front. Microbiol.">
        <title>Characterization of the trimethylamine N-oxide transporter from Pelagibacter strain HTCC1062 reveals its oligotrophic niche adaption.</title>
        <authorList>
            <person name="Gao C."/>
            <person name="Zhang N."/>
            <person name="He X.Y."/>
            <person name="Wang N."/>
            <person name="Zhang X.Y."/>
            <person name="Wang P."/>
            <person name="Chen X.L."/>
            <person name="Zhang Y.Z."/>
            <person name="Ding J.M."/>
            <person name="Li C.Y."/>
        </authorList>
    </citation>
    <scope>FUNCTION IN TMAO TRANSPORT</scope>
    <scope>MUTAGENESIS OF TRP-38; TRP-85; PHE-89; GLU-114; PHE-210 AND TRP-212</scope>
    <source>
        <strain>HTCC1062</strain>
    </source>
</reference>
<keyword id="KW-0574">Periplasm</keyword>
<keyword id="KW-1185">Reference proteome</keyword>
<keyword id="KW-0732">Signal</keyword>
<keyword id="KW-0813">Transport</keyword>
<organism>
    <name type="scientific">Pelagibacter ubique (strain HTCC1062)</name>
    <dbReference type="NCBI Taxonomy" id="335992"/>
    <lineage>
        <taxon>Bacteria</taxon>
        <taxon>Pseudomonadati</taxon>
        <taxon>Pseudomonadota</taxon>
        <taxon>Alphaproteobacteria</taxon>
        <taxon>Candidatus Pelagibacterales</taxon>
        <taxon>Candidatus Pelagibacteraceae</taxon>
        <taxon>Candidatus Pelagibacter</taxon>
    </lineage>
</organism>
<protein>
    <recommendedName>
        <fullName evidence="5">Trimethylamine N-oxide-binding protein</fullName>
        <shortName evidence="5">TMAO-binding protein</shortName>
    </recommendedName>
</protein>
<evidence type="ECO:0000250" key="1">
    <source>
        <dbReference type="UniProtKB" id="Q5LT66"/>
    </source>
</evidence>
<evidence type="ECO:0000255" key="2"/>
<evidence type="ECO:0000269" key="3">
    <source>
    </source>
</evidence>
<evidence type="ECO:0000303" key="4">
    <source>
    </source>
</evidence>
<evidence type="ECO:0000305" key="5"/>
<evidence type="ECO:0000305" key="6">
    <source>
    </source>
</evidence>
<evidence type="ECO:0000312" key="7">
    <source>
        <dbReference type="EMBL" id="AAZ22105.1"/>
    </source>
</evidence>
<feature type="signal peptide" evidence="2">
    <location>
        <begin position="1"/>
        <end position="24"/>
    </location>
</feature>
<feature type="chain" id="PRO_5004238589" description="Trimethylamine N-oxide-binding protein">
    <location>
        <begin position="25"/>
        <end position="314"/>
    </location>
</feature>
<feature type="binding site" evidence="1">
    <location>
        <position position="38"/>
    </location>
    <ligand>
        <name>trimethylamine N-oxide</name>
        <dbReference type="ChEBI" id="CHEBI:15724"/>
    </ligand>
</feature>
<feature type="binding site" evidence="1">
    <location>
        <position position="85"/>
    </location>
    <ligand>
        <name>trimethylamine N-oxide</name>
        <dbReference type="ChEBI" id="CHEBI:15724"/>
    </ligand>
</feature>
<feature type="binding site" evidence="1">
    <location>
        <position position="114"/>
    </location>
    <ligand>
        <name>trimethylamine N-oxide</name>
        <dbReference type="ChEBI" id="CHEBI:15724"/>
    </ligand>
</feature>
<feature type="binding site" evidence="1">
    <location>
        <position position="164"/>
    </location>
    <ligand>
        <name>trimethylamine N-oxide</name>
        <dbReference type="ChEBI" id="CHEBI:15724"/>
    </ligand>
</feature>
<feature type="binding site" evidence="1">
    <location>
        <position position="212"/>
    </location>
    <ligand>
        <name>trimethylamine N-oxide</name>
        <dbReference type="ChEBI" id="CHEBI:15724"/>
    </ligand>
</feature>
<feature type="mutagenesis site" description="Maintains a relatively high binding affinity toward TMAO." evidence="3">
    <original>W</original>
    <variation>A</variation>
    <location>
        <position position="38"/>
    </location>
</feature>
<feature type="mutagenesis site" description="Severely decreases the binding affinity toward TMAO." evidence="3">
    <original>W</original>
    <variation>A</variation>
    <location>
        <position position="85"/>
    </location>
</feature>
<feature type="mutagenesis site" description="Severely decreases the binding affinity toward TMAO." evidence="3">
    <original>F</original>
    <variation>A</variation>
    <location>
        <position position="89"/>
    </location>
</feature>
<feature type="mutagenesis site" description="Abolishes the binding affinity toward TMAO." evidence="3">
    <original>E</original>
    <variation>A</variation>
    <location>
        <position position="114"/>
    </location>
</feature>
<feature type="mutagenesis site" description="Maintains a relatively high binding affinity toward TMAO." evidence="3">
    <original>F</original>
    <variation>A</variation>
    <location>
        <position position="210"/>
    </location>
</feature>
<feature type="mutagenesis site" description="Severely decreases the binding affinity toward TMAO." evidence="3">
    <original>W</original>
    <variation>A</variation>
    <location>
        <position position="212"/>
    </location>
</feature>
<name>TMOX_PELUB</name>
<gene>
    <name evidence="4" type="primary">tmoX</name>
    <name evidence="7" type="ordered locus">SAR11_1302</name>
</gene>